<gene>
    <name evidence="1" type="primary">rpmF</name>
    <name type="ordered locus">NGK_2654</name>
</gene>
<organism>
    <name type="scientific">Neisseria gonorrhoeae (strain NCCP11945)</name>
    <dbReference type="NCBI Taxonomy" id="521006"/>
    <lineage>
        <taxon>Bacteria</taxon>
        <taxon>Pseudomonadati</taxon>
        <taxon>Pseudomonadota</taxon>
        <taxon>Betaproteobacteria</taxon>
        <taxon>Neisseriales</taxon>
        <taxon>Neisseriaceae</taxon>
        <taxon>Neisseria</taxon>
    </lineage>
</organism>
<sequence>MAVQQNKKSPSKRGMHRSHDALTAPALFVDSTTGEVHRPHHISPNGMYRGRKVVKAKGE</sequence>
<comment type="similarity">
    <text evidence="1">Belongs to the bacterial ribosomal protein bL32 family.</text>
</comment>
<protein>
    <recommendedName>
        <fullName evidence="1">Large ribosomal subunit protein bL32</fullName>
    </recommendedName>
    <alternativeName>
        <fullName evidence="3">50S ribosomal protein L32</fullName>
    </alternativeName>
</protein>
<proteinExistence type="inferred from homology"/>
<accession>B4RJI8</accession>
<keyword id="KW-0687">Ribonucleoprotein</keyword>
<keyword id="KW-0689">Ribosomal protein</keyword>
<reference key="1">
    <citation type="journal article" date="2008" name="J. Bacteriol.">
        <title>Complete genome sequence of Neisseria gonorrhoeae NCCP11945.</title>
        <authorList>
            <person name="Chung G.T."/>
            <person name="Yoo J.S."/>
            <person name="Oh H.B."/>
            <person name="Lee Y.S."/>
            <person name="Cha S.H."/>
            <person name="Kim S.J."/>
            <person name="Yoo C.K."/>
        </authorList>
    </citation>
    <scope>NUCLEOTIDE SEQUENCE [LARGE SCALE GENOMIC DNA]</scope>
    <source>
        <strain>NCCP11945</strain>
    </source>
</reference>
<name>RL32_NEIG2</name>
<evidence type="ECO:0000255" key="1">
    <source>
        <dbReference type="HAMAP-Rule" id="MF_00340"/>
    </source>
</evidence>
<evidence type="ECO:0000256" key="2">
    <source>
        <dbReference type="SAM" id="MobiDB-lite"/>
    </source>
</evidence>
<evidence type="ECO:0000305" key="3"/>
<feature type="chain" id="PRO_1000120149" description="Large ribosomal subunit protein bL32">
    <location>
        <begin position="1"/>
        <end position="59"/>
    </location>
</feature>
<feature type="region of interest" description="Disordered" evidence="2">
    <location>
        <begin position="1"/>
        <end position="59"/>
    </location>
</feature>
<feature type="compositionally biased region" description="Basic residues" evidence="2">
    <location>
        <begin position="49"/>
        <end position="59"/>
    </location>
</feature>
<dbReference type="EMBL" id="CP001050">
    <property type="protein sequence ID" value="ACF31253.1"/>
    <property type="molecule type" value="Genomic_DNA"/>
</dbReference>
<dbReference type="RefSeq" id="WP_003687186.1">
    <property type="nucleotide sequence ID" value="NC_011035.1"/>
</dbReference>
<dbReference type="SMR" id="B4RJI8"/>
<dbReference type="GeneID" id="66754502"/>
<dbReference type="KEGG" id="ngk:NGK_2654"/>
<dbReference type="HOGENOM" id="CLU_129084_2_1_4"/>
<dbReference type="Proteomes" id="UP000002564">
    <property type="component" value="Chromosome"/>
</dbReference>
<dbReference type="GO" id="GO:0015934">
    <property type="term" value="C:large ribosomal subunit"/>
    <property type="evidence" value="ECO:0007669"/>
    <property type="project" value="InterPro"/>
</dbReference>
<dbReference type="GO" id="GO:0003735">
    <property type="term" value="F:structural constituent of ribosome"/>
    <property type="evidence" value="ECO:0007669"/>
    <property type="project" value="InterPro"/>
</dbReference>
<dbReference type="GO" id="GO:0006412">
    <property type="term" value="P:translation"/>
    <property type="evidence" value="ECO:0007669"/>
    <property type="project" value="UniProtKB-UniRule"/>
</dbReference>
<dbReference type="HAMAP" id="MF_00340">
    <property type="entry name" value="Ribosomal_bL32"/>
    <property type="match status" value="1"/>
</dbReference>
<dbReference type="InterPro" id="IPR002677">
    <property type="entry name" value="Ribosomal_bL32"/>
</dbReference>
<dbReference type="InterPro" id="IPR044957">
    <property type="entry name" value="Ribosomal_bL32_bact"/>
</dbReference>
<dbReference type="InterPro" id="IPR011332">
    <property type="entry name" value="Ribosomal_zn-bd"/>
</dbReference>
<dbReference type="NCBIfam" id="TIGR01031">
    <property type="entry name" value="rpmF_bact"/>
    <property type="match status" value="1"/>
</dbReference>
<dbReference type="PANTHER" id="PTHR35534">
    <property type="entry name" value="50S RIBOSOMAL PROTEIN L32"/>
    <property type="match status" value="1"/>
</dbReference>
<dbReference type="PANTHER" id="PTHR35534:SF1">
    <property type="entry name" value="LARGE RIBOSOMAL SUBUNIT PROTEIN BL32"/>
    <property type="match status" value="1"/>
</dbReference>
<dbReference type="Pfam" id="PF01783">
    <property type="entry name" value="Ribosomal_L32p"/>
    <property type="match status" value="1"/>
</dbReference>
<dbReference type="SUPFAM" id="SSF57829">
    <property type="entry name" value="Zn-binding ribosomal proteins"/>
    <property type="match status" value="1"/>
</dbReference>